<protein>
    <recommendedName>
        <fullName evidence="1">Adenylosuccinate synthetase</fullName>
        <shortName evidence="1">AMPSase</shortName>
        <shortName evidence="1">AdSS</shortName>
        <ecNumber evidence="1">6.3.4.4</ecNumber>
    </recommendedName>
    <alternativeName>
        <fullName evidence="1">IMP--aspartate ligase</fullName>
    </alternativeName>
</protein>
<evidence type="ECO:0000255" key="1">
    <source>
        <dbReference type="HAMAP-Rule" id="MF_00011"/>
    </source>
</evidence>
<organism>
    <name type="scientific">Staphylococcus aureus (strain COL)</name>
    <dbReference type="NCBI Taxonomy" id="93062"/>
    <lineage>
        <taxon>Bacteria</taxon>
        <taxon>Bacillati</taxon>
        <taxon>Bacillota</taxon>
        <taxon>Bacilli</taxon>
        <taxon>Bacillales</taxon>
        <taxon>Staphylococcaceae</taxon>
        <taxon>Staphylococcus</taxon>
    </lineage>
</organism>
<accession>Q5HJX8</accession>
<comment type="function">
    <text evidence="1">Plays an important role in the de novo pathway of purine nucleotide biosynthesis. Catalyzes the first committed step in the biosynthesis of AMP from IMP.</text>
</comment>
<comment type="catalytic activity">
    <reaction evidence="1">
        <text>IMP + L-aspartate + GTP = N(6)-(1,2-dicarboxyethyl)-AMP + GDP + phosphate + 2 H(+)</text>
        <dbReference type="Rhea" id="RHEA:15753"/>
        <dbReference type="ChEBI" id="CHEBI:15378"/>
        <dbReference type="ChEBI" id="CHEBI:29991"/>
        <dbReference type="ChEBI" id="CHEBI:37565"/>
        <dbReference type="ChEBI" id="CHEBI:43474"/>
        <dbReference type="ChEBI" id="CHEBI:57567"/>
        <dbReference type="ChEBI" id="CHEBI:58053"/>
        <dbReference type="ChEBI" id="CHEBI:58189"/>
        <dbReference type="EC" id="6.3.4.4"/>
    </reaction>
</comment>
<comment type="cofactor">
    <cofactor evidence="1">
        <name>Mg(2+)</name>
        <dbReference type="ChEBI" id="CHEBI:18420"/>
    </cofactor>
    <text evidence="1">Binds 1 Mg(2+) ion per subunit.</text>
</comment>
<comment type="pathway">
    <text evidence="1">Purine metabolism; AMP biosynthesis via de novo pathway; AMP from IMP: step 1/2.</text>
</comment>
<comment type="subunit">
    <text evidence="1">Homodimer.</text>
</comment>
<comment type="subcellular location">
    <subcellularLocation>
        <location evidence="1">Cytoplasm</location>
    </subcellularLocation>
</comment>
<comment type="similarity">
    <text evidence="1">Belongs to the adenylosuccinate synthetase family.</text>
</comment>
<dbReference type="EC" id="6.3.4.4" evidence="1"/>
<dbReference type="EMBL" id="CP000046">
    <property type="protein sequence ID" value="AAW37406.1"/>
    <property type="molecule type" value="Genomic_DNA"/>
</dbReference>
<dbReference type="RefSeq" id="WP_000095327.1">
    <property type="nucleotide sequence ID" value="NZ_JBGOFO010000001.1"/>
</dbReference>
<dbReference type="SMR" id="Q5HJX8"/>
<dbReference type="KEGG" id="sac:SACOL0018"/>
<dbReference type="HOGENOM" id="CLU_029848_0_0_9"/>
<dbReference type="UniPathway" id="UPA00075">
    <property type="reaction ID" value="UER00335"/>
</dbReference>
<dbReference type="Proteomes" id="UP000000530">
    <property type="component" value="Chromosome"/>
</dbReference>
<dbReference type="GO" id="GO:0005737">
    <property type="term" value="C:cytoplasm"/>
    <property type="evidence" value="ECO:0007669"/>
    <property type="project" value="UniProtKB-SubCell"/>
</dbReference>
<dbReference type="GO" id="GO:0004019">
    <property type="term" value="F:adenylosuccinate synthase activity"/>
    <property type="evidence" value="ECO:0007669"/>
    <property type="project" value="UniProtKB-UniRule"/>
</dbReference>
<dbReference type="GO" id="GO:0005525">
    <property type="term" value="F:GTP binding"/>
    <property type="evidence" value="ECO:0007669"/>
    <property type="project" value="UniProtKB-UniRule"/>
</dbReference>
<dbReference type="GO" id="GO:0000287">
    <property type="term" value="F:magnesium ion binding"/>
    <property type="evidence" value="ECO:0007669"/>
    <property type="project" value="UniProtKB-UniRule"/>
</dbReference>
<dbReference type="GO" id="GO:0044208">
    <property type="term" value="P:'de novo' AMP biosynthetic process"/>
    <property type="evidence" value="ECO:0007669"/>
    <property type="project" value="UniProtKB-UniRule"/>
</dbReference>
<dbReference type="GO" id="GO:0046040">
    <property type="term" value="P:IMP metabolic process"/>
    <property type="evidence" value="ECO:0007669"/>
    <property type="project" value="TreeGrafter"/>
</dbReference>
<dbReference type="CDD" id="cd03108">
    <property type="entry name" value="AdSS"/>
    <property type="match status" value="1"/>
</dbReference>
<dbReference type="FunFam" id="1.10.300.10:FF:000001">
    <property type="entry name" value="Adenylosuccinate synthetase"/>
    <property type="match status" value="1"/>
</dbReference>
<dbReference type="FunFam" id="3.90.170.10:FF:000001">
    <property type="entry name" value="Adenylosuccinate synthetase"/>
    <property type="match status" value="1"/>
</dbReference>
<dbReference type="Gene3D" id="3.40.440.10">
    <property type="entry name" value="Adenylosuccinate Synthetase, subunit A, domain 1"/>
    <property type="match status" value="1"/>
</dbReference>
<dbReference type="Gene3D" id="1.10.300.10">
    <property type="entry name" value="Adenylosuccinate Synthetase, subunit A, domain 2"/>
    <property type="match status" value="1"/>
</dbReference>
<dbReference type="Gene3D" id="3.90.170.10">
    <property type="entry name" value="Adenylosuccinate Synthetase, subunit A, domain 3"/>
    <property type="match status" value="1"/>
</dbReference>
<dbReference type="HAMAP" id="MF_00011">
    <property type="entry name" value="Adenylosucc_synth"/>
    <property type="match status" value="1"/>
</dbReference>
<dbReference type="InterPro" id="IPR018220">
    <property type="entry name" value="Adenylosuccin_syn_GTP-bd"/>
</dbReference>
<dbReference type="InterPro" id="IPR033128">
    <property type="entry name" value="Adenylosuccin_syn_Lys_AS"/>
</dbReference>
<dbReference type="InterPro" id="IPR042109">
    <property type="entry name" value="Adenylosuccinate_synth_dom1"/>
</dbReference>
<dbReference type="InterPro" id="IPR042110">
    <property type="entry name" value="Adenylosuccinate_synth_dom2"/>
</dbReference>
<dbReference type="InterPro" id="IPR042111">
    <property type="entry name" value="Adenylosuccinate_synth_dom3"/>
</dbReference>
<dbReference type="InterPro" id="IPR001114">
    <property type="entry name" value="Adenylosuccinate_synthetase"/>
</dbReference>
<dbReference type="InterPro" id="IPR027417">
    <property type="entry name" value="P-loop_NTPase"/>
</dbReference>
<dbReference type="NCBIfam" id="NF002223">
    <property type="entry name" value="PRK01117.1"/>
    <property type="match status" value="1"/>
</dbReference>
<dbReference type="NCBIfam" id="TIGR00184">
    <property type="entry name" value="purA"/>
    <property type="match status" value="1"/>
</dbReference>
<dbReference type="PANTHER" id="PTHR11846">
    <property type="entry name" value="ADENYLOSUCCINATE SYNTHETASE"/>
    <property type="match status" value="1"/>
</dbReference>
<dbReference type="PANTHER" id="PTHR11846:SF0">
    <property type="entry name" value="ADENYLOSUCCINATE SYNTHETASE"/>
    <property type="match status" value="1"/>
</dbReference>
<dbReference type="Pfam" id="PF00709">
    <property type="entry name" value="Adenylsucc_synt"/>
    <property type="match status" value="1"/>
</dbReference>
<dbReference type="SMART" id="SM00788">
    <property type="entry name" value="Adenylsucc_synt"/>
    <property type="match status" value="1"/>
</dbReference>
<dbReference type="SUPFAM" id="SSF52540">
    <property type="entry name" value="P-loop containing nucleoside triphosphate hydrolases"/>
    <property type="match status" value="1"/>
</dbReference>
<dbReference type="PROSITE" id="PS01266">
    <property type="entry name" value="ADENYLOSUCCIN_SYN_1"/>
    <property type="match status" value="1"/>
</dbReference>
<dbReference type="PROSITE" id="PS00513">
    <property type="entry name" value="ADENYLOSUCCIN_SYN_2"/>
    <property type="match status" value="1"/>
</dbReference>
<feature type="chain" id="PRO_0000095226" description="Adenylosuccinate synthetase">
    <location>
        <begin position="1"/>
        <end position="427"/>
    </location>
</feature>
<feature type="active site" description="Proton acceptor" evidence="1">
    <location>
        <position position="13"/>
    </location>
</feature>
<feature type="active site" description="Proton donor" evidence="1">
    <location>
        <position position="41"/>
    </location>
</feature>
<feature type="binding site" evidence="1">
    <location>
        <begin position="12"/>
        <end position="18"/>
    </location>
    <ligand>
        <name>GTP</name>
        <dbReference type="ChEBI" id="CHEBI:37565"/>
    </ligand>
</feature>
<feature type="binding site" description="in other chain" evidence="1">
    <location>
        <begin position="13"/>
        <end position="16"/>
    </location>
    <ligand>
        <name>IMP</name>
        <dbReference type="ChEBI" id="CHEBI:58053"/>
        <note>ligand shared between dimeric partners</note>
    </ligand>
</feature>
<feature type="binding site" evidence="1">
    <location>
        <position position="13"/>
    </location>
    <ligand>
        <name>Mg(2+)</name>
        <dbReference type="ChEBI" id="CHEBI:18420"/>
    </ligand>
</feature>
<feature type="binding site" description="in other chain" evidence="1">
    <location>
        <begin position="38"/>
        <end position="41"/>
    </location>
    <ligand>
        <name>IMP</name>
        <dbReference type="ChEBI" id="CHEBI:58053"/>
        <note>ligand shared between dimeric partners</note>
    </ligand>
</feature>
<feature type="binding site" evidence="1">
    <location>
        <begin position="40"/>
        <end position="42"/>
    </location>
    <ligand>
        <name>GTP</name>
        <dbReference type="ChEBI" id="CHEBI:37565"/>
    </ligand>
</feature>
<feature type="binding site" evidence="1">
    <location>
        <position position="40"/>
    </location>
    <ligand>
        <name>Mg(2+)</name>
        <dbReference type="ChEBI" id="CHEBI:18420"/>
    </ligand>
</feature>
<feature type="binding site" description="in other chain" evidence="1">
    <location>
        <position position="128"/>
    </location>
    <ligand>
        <name>IMP</name>
        <dbReference type="ChEBI" id="CHEBI:58053"/>
        <note>ligand shared between dimeric partners</note>
    </ligand>
</feature>
<feature type="binding site" evidence="1">
    <location>
        <position position="142"/>
    </location>
    <ligand>
        <name>IMP</name>
        <dbReference type="ChEBI" id="CHEBI:58053"/>
        <note>ligand shared between dimeric partners</note>
    </ligand>
</feature>
<feature type="binding site" description="in other chain" evidence="1">
    <location>
        <position position="223"/>
    </location>
    <ligand>
        <name>IMP</name>
        <dbReference type="ChEBI" id="CHEBI:58053"/>
        <note>ligand shared between dimeric partners</note>
    </ligand>
</feature>
<feature type="binding site" description="in other chain" evidence="1">
    <location>
        <position position="238"/>
    </location>
    <ligand>
        <name>IMP</name>
        <dbReference type="ChEBI" id="CHEBI:58053"/>
        <note>ligand shared between dimeric partners</note>
    </ligand>
</feature>
<feature type="binding site" evidence="1">
    <location>
        <begin position="298"/>
        <end position="304"/>
    </location>
    <ligand>
        <name>substrate</name>
    </ligand>
</feature>
<feature type="binding site" description="in other chain" evidence="1">
    <location>
        <position position="302"/>
    </location>
    <ligand>
        <name>IMP</name>
        <dbReference type="ChEBI" id="CHEBI:58053"/>
        <note>ligand shared between dimeric partners</note>
    </ligand>
</feature>
<feature type="binding site" evidence="1">
    <location>
        <position position="304"/>
    </location>
    <ligand>
        <name>GTP</name>
        <dbReference type="ChEBI" id="CHEBI:37565"/>
    </ligand>
</feature>
<feature type="binding site" evidence="1">
    <location>
        <begin position="330"/>
        <end position="332"/>
    </location>
    <ligand>
        <name>GTP</name>
        <dbReference type="ChEBI" id="CHEBI:37565"/>
    </ligand>
</feature>
<feature type="binding site" evidence="1">
    <location>
        <begin position="412"/>
        <end position="414"/>
    </location>
    <ligand>
        <name>GTP</name>
        <dbReference type="ChEBI" id="CHEBI:37565"/>
    </ligand>
</feature>
<sequence length="427" mass="47579">MSSIVVVGTQWGDEGKGKITDFLAEQSDVIARFSGGNNAGHTIQFGGETYKLHLVPSGIFYKDKLAVIGNGVVVDPVALLKELDGLNERGIPTSNLRISNRAQVILPYHLAQDEYEERLRGDNKIGTTKKGIGPAYVDKVQRIGIRMADLLEKETFERLLKSNIEYKQAYFKGMFNETCPSFDDIFEEYYAAGQRLKEFVTDTSKILDDAFVADEKVLFEGAQGVMLDIDHGTYPFVTSSNPIAGNVTVGTGVGPTFVSKVIGVCKAYTSRVGDGPFPTELFDEDGHHIREVGREYGTTTGRPRRVGWFDSVVLRHSRRVSGITDLSINSIDVLTGLDTVKICTAYELDGKEITEYPANLDQLKRCKPIFEELPGWTEDVTNVRTLEELPENARKYLERISELCNVQISIFSVGPDREQTNLLKELW</sequence>
<reference key="1">
    <citation type="journal article" date="2005" name="J. Bacteriol.">
        <title>Insights on evolution of virulence and resistance from the complete genome analysis of an early methicillin-resistant Staphylococcus aureus strain and a biofilm-producing methicillin-resistant Staphylococcus epidermidis strain.</title>
        <authorList>
            <person name="Gill S.R."/>
            <person name="Fouts D.E."/>
            <person name="Archer G.L."/>
            <person name="Mongodin E.F."/>
            <person name="DeBoy R.T."/>
            <person name="Ravel J."/>
            <person name="Paulsen I.T."/>
            <person name="Kolonay J.F."/>
            <person name="Brinkac L.M."/>
            <person name="Beanan M.J."/>
            <person name="Dodson R.J."/>
            <person name="Daugherty S.C."/>
            <person name="Madupu R."/>
            <person name="Angiuoli S.V."/>
            <person name="Durkin A.S."/>
            <person name="Haft D.H."/>
            <person name="Vamathevan J.J."/>
            <person name="Khouri H."/>
            <person name="Utterback T.R."/>
            <person name="Lee C."/>
            <person name="Dimitrov G."/>
            <person name="Jiang L."/>
            <person name="Qin H."/>
            <person name="Weidman J."/>
            <person name="Tran K."/>
            <person name="Kang K.H."/>
            <person name="Hance I.R."/>
            <person name="Nelson K.E."/>
            <person name="Fraser C.M."/>
        </authorList>
    </citation>
    <scope>NUCLEOTIDE SEQUENCE [LARGE SCALE GENOMIC DNA]</scope>
    <source>
        <strain>COL</strain>
    </source>
</reference>
<proteinExistence type="inferred from homology"/>
<name>PURA_STAAC</name>
<keyword id="KW-0963">Cytoplasm</keyword>
<keyword id="KW-0342">GTP-binding</keyword>
<keyword id="KW-0436">Ligase</keyword>
<keyword id="KW-0460">Magnesium</keyword>
<keyword id="KW-0479">Metal-binding</keyword>
<keyword id="KW-0547">Nucleotide-binding</keyword>
<keyword id="KW-0658">Purine biosynthesis</keyword>
<gene>
    <name evidence="1" type="primary">purA</name>
    <name type="ordered locus">SACOL0018</name>
</gene>